<proteinExistence type="inferred from homology"/>
<accession>B0TM09</accession>
<comment type="function">
    <text evidence="1">One of the primary rRNA binding proteins. Required for association of the 30S and 50S subunits to form the 70S ribosome, for tRNA binding and peptide bond formation. It has been suggested to have peptidyltransferase activity; this is somewhat controversial. Makes several contacts with the 16S rRNA in the 70S ribosome.</text>
</comment>
<comment type="subunit">
    <text evidence="1">Part of the 50S ribosomal subunit. Forms a bridge to the 30S subunit in the 70S ribosome.</text>
</comment>
<comment type="similarity">
    <text evidence="1">Belongs to the universal ribosomal protein uL2 family.</text>
</comment>
<keyword id="KW-0687">Ribonucleoprotein</keyword>
<keyword id="KW-0689">Ribosomal protein</keyword>
<keyword id="KW-0694">RNA-binding</keyword>
<keyword id="KW-0699">rRNA-binding</keyword>
<sequence length="275" mass="30049">MAVIKCKPTSPGRRHLVKVVNSDLHKGKPFAGLLAKKSKSGGRNNTGRITVRHIGGGHKQHYRLIDFKRNKDGIPAKVERLEYDPNRTANIALVLYADGERRYILAAKGMQAGDKIQSGIDAEIKSGNAMPLRNIPVGSVVHAVEMKPGKGAQIARSAGAYVQVIARDGAYATLRLRSGEMRKVPVDCRATLGEVGNAEHMLRQLGKAGAKRWRGVRPTVRGVAMNPVDHPHGGGEGRTSGGRHPVSPWGQPTKGYKTRSNKRTDKYIVRRRNKK</sequence>
<dbReference type="EMBL" id="CP000931">
    <property type="protein sequence ID" value="ABZ78671.1"/>
    <property type="molecule type" value="Genomic_DNA"/>
</dbReference>
<dbReference type="RefSeq" id="WP_012279178.1">
    <property type="nucleotide sequence ID" value="NC_010334.1"/>
</dbReference>
<dbReference type="SMR" id="B0TM09"/>
<dbReference type="STRING" id="458817.Shal_4131"/>
<dbReference type="KEGG" id="shl:Shal_4131"/>
<dbReference type="eggNOG" id="COG0090">
    <property type="taxonomic scope" value="Bacteria"/>
</dbReference>
<dbReference type="HOGENOM" id="CLU_036235_2_1_6"/>
<dbReference type="OrthoDB" id="9778722at2"/>
<dbReference type="Proteomes" id="UP000001317">
    <property type="component" value="Chromosome"/>
</dbReference>
<dbReference type="GO" id="GO:0015934">
    <property type="term" value="C:large ribosomal subunit"/>
    <property type="evidence" value="ECO:0007669"/>
    <property type="project" value="InterPro"/>
</dbReference>
<dbReference type="GO" id="GO:0019843">
    <property type="term" value="F:rRNA binding"/>
    <property type="evidence" value="ECO:0007669"/>
    <property type="project" value="UniProtKB-UniRule"/>
</dbReference>
<dbReference type="GO" id="GO:0003735">
    <property type="term" value="F:structural constituent of ribosome"/>
    <property type="evidence" value="ECO:0007669"/>
    <property type="project" value="InterPro"/>
</dbReference>
<dbReference type="GO" id="GO:0016740">
    <property type="term" value="F:transferase activity"/>
    <property type="evidence" value="ECO:0007669"/>
    <property type="project" value="InterPro"/>
</dbReference>
<dbReference type="GO" id="GO:0002181">
    <property type="term" value="P:cytoplasmic translation"/>
    <property type="evidence" value="ECO:0007669"/>
    <property type="project" value="TreeGrafter"/>
</dbReference>
<dbReference type="FunFam" id="2.30.30.30:FF:000001">
    <property type="entry name" value="50S ribosomal protein L2"/>
    <property type="match status" value="1"/>
</dbReference>
<dbReference type="FunFam" id="2.40.50.140:FF:000003">
    <property type="entry name" value="50S ribosomal protein L2"/>
    <property type="match status" value="1"/>
</dbReference>
<dbReference type="FunFam" id="4.10.950.10:FF:000001">
    <property type="entry name" value="50S ribosomal protein L2"/>
    <property type="match status" value="1"/>
</dbReference>
<dbReference type="Gene3D" id="2.30.30.30">
    <property type="match status" value="1"/>
</dbReference>
<dbReference type="Gene3D" id="2.40.50.140">
    <property type="entry name" value="Nucleic acid-binding proteins"/>
    <property type="match status" value="1"/>
</dbReference>
<dbReference type="Gene3D" id="4.10.950.10">
    <property type="entry name" value="Ribosomal protein L2, domain 3"/>
    <property type="match status" value="1"/>
</dbReference>
<dbReference type="HAMAP" id="MF_01320_B">
    <property type="entry name" value="Ribosomal_uL2_B"/>
    <property type="match status" value="1"/>
</dbReference>
<dbReference type="InterPro" id="IPR012340">
    <property type="entry name" value="NA-bd_OB-fold"/>
</dbReference>
<dbReference type="InterPro" id="IPR014722">
    <property type="entry name" value="Rib_uL2_dom2"/>
</dbReference>
<dbReference type="InterPro" id="IPR002171">
    <property type="entry name" value="Ribosomal_uL2"/>
</dbReference>
<dbReference type="InterPro" id="IPR005880">
    <property type="entry name" value="Ribosomal_uL2_bac/org-type"/>
</dbReference>
<dbReference type="InterPro" id="IPR022669">
    <property type="entry name" value="Ribosomal_uL2_C"/>
</dbReference>
<dbReference type="InterPro" id="IPR022671">
    <property type="entry name" value="Ribosomal_uL2_CS"/>
</dbReference>
<dbReference type="InterPro" id="IPR014726">
    <property type="entry name" value="Ribosomal_uL2_dom3"/>
</dbReference>
<dbReference type="InterPro" id="IPR022666">
    <property type="entry name" value="Ribosomal_uL2_RNA-bd_dom"/>
</dbReference>
<dbReference type="InterPro" id="IPR008991">
    <property type="entry name" value="Translation_prot_SH3-like_sf"/>
</dbReference>
<dbReference type="NCBIfam" id="TIGR01171">
    <property type="entry name" value="rplB_bact"/>
    <property type="match status" value="1"/>
</dbReference>
<dbReference type="PANTHER" id="PTHR13691:SF5">
    <property type="entry name" value="LARGE RIBOSOMAL SUBUNIT PROTEIN UL2M"/>
    <property type="match status" value="1"/>
</dbReference>
<dbReference type="PANTHER" id="PTHR13691">
    <property type="entry name" value="RIBOSOMAL PROTEIN L2"/>
    <property type="match status" value="1"/>
</dbReference>
<dbReference type="Pfam" id="PF00181">
    <property type="entry name" value="Ribosomal_L2"/>
    <property type="match status" value="1"/>
</dbReference>
<dbReference type="Pfam" id="PF03947">
    <property type="entry name" value="Ribosomal_L2_C"/>
    <property type="match status" value="1"/>
</dbReference>
<dbReference type="PIRSF" id="PIRSF002158">
    <property type="entry name" value="Ribosomal_L2"/>
    <property type="match status" value="1"/>
</dbReference>
<dbReference type="SMART" id="SM01383">
    <property type="entry name" value="Ribosomal_L2"/>
    <property type="match status" value="1"/>
</dbReference>
<dbReference type="SMART" id="SM01382">
    <property type="entry name" value="Ribosomal_L2_C"/>
    <property type="match status" value="1"/>
</dbReference>
<dbReference type="SUPFAM" id="SSF50249">
    <property type="entry name" value="Nucleic acid-binding proteins"/>
    <property type="match status" value="1"/>
</dbReference>
<dbReference type="SUPFAM" id="SSF50104">
    <property type="entry name" value="Translation proteins SH3-like domain"/>
    <property type="match status" value="1"/>
</dbReference>
<dbReference type="PROSITE" id="PS00467">
    <property type="entry name" value="RIBOSOMAL_L2"/>
    <property type="match status" value="1"/>
</dbReference>
<evidence type="ECO:0000255" key="1">
    <source>
        <dbReference type="HAMAP-Rule" id="MF_01320"/>
    </source>
</evidence>
<evidence type="ECO:0000256" key="2">
    <source>
        <dbReference type="SAM" id="MobiDB-lite"/>
    </source>
</evidence>
<evidence type="ECO:0000305" key="3"/>
<protein>
    <recommendedName>
        <fullName evidence="1">Large ribosomal subunit protein uL2</fullName>
    </recommendedName>
    <alternativeName>
        <fullName evidence="3">50S ribosomal protein L2</fullName>
    </alternativeName>
</protein>
<feature type="chain" id="PRO_1000086352" description="Large ribosomal subunit protein uL2">
    <location>
        <begin position="1"/>
        <end position="275"/>
    </location>
</feature>
<feature type="region of interest" description="Disordered" evidence="2">
    <location>
        <begin position="223"/>
        <end position="275"/>
    </location>
</feature>
<gene>
    <name evidence="1" type="primary">rplB</name>
    <name type="ordered locus">Shal_4131</name>
</gene>
<reference key="1">
    <citation type="submission" date="2008-01" db="EMBL/GenBank/DDBJ databases">
        <title>Complete sequence of Shewanella halifaxensis HAW-EB4.</title>
        <authorList>
            <consortium name="US DOE Joint Genome Institute"/>
            <person name="Copeland A."/>
            <person name="Lucas S."/>
            <person name="Lapidus A."/>
            <person name="Glavina del Rio T."/>
            <person name="Dalin E."/>
            <person name="Tice H."/>
            <person name="Bruce D."/>
            <person name="Goodwin L."/>
            <person name="Pitluck S."/>
            <person name="Sims D."/>
            <person name="Brettin T."/>
            <person name="Detter J.C."/>
            <person name="Han C."/>
            <person name="Kuske C.R."/>
            <person name="Schmutz J."/>
            <person name="Larimer F."/>
            <person name="Land M."/>
            <person name="Hauser L."/>
            <person name="Kyrpides N."/>
            <person name="Kim E."/>
            <person name="Zhao J.-S."/>
            <person name="Richardson P."/>
        </authorList>
    </citation>
    <scope>NUCLEOTIDE SEQUENCE [LARGE SCALE GENOMIC DNA]</scope>
    <source>
        <strain>HAW-EB4</strain>
    </source>
</reference>
<organism>
    <name type="scientific">Shewanella halifaxensis (strain HAW-EB4)</name>
    <dbReference type="NCBI Taxonomy" id="458817"/>
    <lineage>
        <taxon>Bacteria</taxon>
        <taxon>Pseudomonadati</taxon>
        <taxon>Pseudomonadota</taxon>
        <taxon>Gammaproteobacteria</taxon>
        <taxon>Alteromonadales</taxon>
        <taxon>Shewanellaceae</taxon>
        <taxon>Shewanella</taxon>
    </lineage>
</organism>
<name>RL2_SHEHH</name>